<name>ARGJ_COREF</name>
<protein>
    <recommendedName>
        <fullName evidence="1">Arginine biosynthesis bifunctional protein ArgJ</fullName>
    </recommendedName>
    <domain>
        <recommendedName>
            <fullName evidence="1">Glutamate N-acetyltransferase</fullName>
            <ecNumber evidence="1">2.3.1.35</ecNumber>
        </recommendedName>
        <alternativeName>
            <fullName evidence="1">Ornithine acetyltransferase</fullName>
            <shortName evidence="1">OATase</shortName>
        </alternativeName>
        <alternativeName>
            <fullName evidence="1">Ornithine transacetylase</fullName>
        </alternativeName>
    </domain>
    <domain>
        <recommendedName>
            <fullName evidence="1">Amino-acid acetyltransferase</fullName>
            <ecNumber evidence="1">2.3.1.1</ecNumber>
        </recommendedName>
        <alternativeName>
            <fullName evidence="1">N-acetylglutamate synthase</fullName>
            <shortName evidence="1">AGSase</shortName>
        </alternativeName>
    </domain>
    <component>
        <recommendedName>
            <fullName evidence="1">Arginine biosynthesis bifunctional protein ArgJ alpha chain</fullName>
        </recommendedName>
    </component>
    <component>
        <recommendedName>
            <fullName evidence="1">Arginine biosynthesis bifunctional protein ArgJ beta chain</fullName>
        </recommendedName>
    </component>
</protein>
<gene>
    <name evidence="1" type="primary">argJ</name>
    <name type="ordered locus">CE1527</name>
</gene>
<keyword id="KW-0012">Acyltransferase</keyword>
<keyword id="KW-0028">Amino-acid biosynthesis</keyword>
<keyword id="KW-0055">Arginine biosynthesis</keyword>
<keyword id="KW-0068">Autocatalytic cleavage</keyword>
<keyword id="KW-0963">Cytoplasm</keyword>
<keyword id="KW-0511">Multifunctional enzyme</keyword>
<keyword id="KW-1185">Reference proteome</keyword>
<keyword id="KW-0808">Transferase</keyword>
<accession>Q8FTN4</accession>
<proteinExistence type="inferred from homology"/>
<dbReference type="EC" id="2.3.1.35" evidence="1"/>
<dbReference type="EC" id="2.3.1.1" evidence="1"/>
<dbReference type="EMBL" id="BA000035">
    <property type="protein sequence ID" value="BAC18337.1"/>
    <property type="molecule type" value="Genomic_DNA"/>
</dbReference>
<dbReference type="RefSeq" id="WP_006770435.1">
    <property type="nucleotide sequence ID" value="NC_004369.1"/>
</dbReference>
<dbReference type="SMR" id="Q8FTN4"/>
<dbReference type="STRING" id="196164.gene:10741942"/>
<dbReference type="KEGG" id="cef:CE1527"/>
<dbReference type="eggNOG" id="COG1364">
    <property type="taxonomic scope" value="Bacteria"/>
</dbReference>
<dbReference type="HOGENOM" id="CLU_027172_2_0_11"/>
<dbReference type="OrthoDB" id="9804242at2"/>
<dbReference type="UniPathway" id="UPA00068">
    <property type="reaction ID" value="UER00106"/>
</dbReference>
<dbReference type="UniPathway" id="UPA00068">
    <property type="reaction ID" value="UER00111"/>
</dbReference>
<dbReference type="Proteomes" id="UP000001409">
    <property type="component" value="Chromosome"/>
</dbReference>
<dbReference type="GO" id="GO:0005737">
    <property type="term" value="C:cytoplasm"/>
    <property type="evidence" value="ECO:0007669"/>
    <property type="project" value="UniProtKB-SubCell"/>
</dbReference>
<dbReference type="GO" id="GO:0004358">
    <property type="term" value="F:glutamate N-acetyltransferase activity"/>
    <property type="evidence" value="ECO:0007669"/>
    <property type="project" value="UniProtKB-UniRule"/>
</dbReference>
<dbReference type="GO" id="GO:0004042">
    <property type="term" value="F:L-glutamate N-acetyltransferase activity"/>
    <property type="evidence" value="ECO:0007669"/>
    <property type="project" value="UniProtKB-UniRule"/>
</dbReference>
<dbReference type="GO" id="GO:0006526">
    <property type="term" value="P:L-arginine biosynthetic process"/>
    <property type="evidence" value="ECO:0007669"/>
    <property type="project" value="UniProtKB-UniRule"/>
</dbReference>
<dbReference type="GO" id="GO:0006592">
    <property type="term" value="P:ornithine biosynthetic process"/>
    <property type="evidence" value="ECO:0007669"/>
    <property type="project" value="TreeGrafter"/>
</dbReference>
<dbReference type="CDD" id="cd02152">
    <property type="entry name" value="OAT"/>
    <property type="match status" value="1"/>
</dbReference>
<dbReference type="Gene3D" id="3.10.20.340">
    <property type="entry name" value="ArgJ beta chain, C-terminal domain"/>
    <property type="match status" value="1"/>
</dbReference>
<dbReference type="Gene3D" id="3.60.70.12">
    <property type="entry name" value="L-amino peptidase D-ALA esterase/amidase"/>
    <property type="match status" value="1"/>
</dbReference>
<dbReference type="HAMAP" id="MF_01106">
    <property type="entry name" value="ArgJ"/>
    <property type="match status" value="1"/>
</dbReference>
<dbReference type="InterPro" id="IPR002813">
    <property type="entry name" value="Arg_biosynth_ArgJ"/>
</dbReference>
<dbReference type="InterPro" id="IPR016117">
    <property type="entry name" value="ArgJ-like_dom_sf"/>
</dbReference>
<dbReference type="InterPro" id="IPR042195">
    <property type="entry name" value="ArgJ_beta_C"/>
</dbReference>
<dbReference type="NCBIfam" id="TIGR00120">
    <property type="entry name" value="ArgJ"/>
    <property type="match status" value="1"/>
</dbReference>
<dbReference type="NCBIfam" id="NF003802">
    <property type="entry name" value="PRK05388.1"/>
    <property type="match status" value="1"/>
</dbReference>
<dbReference type="PANTHER" id="PTHR23100">
    <property type="entry name" value="ARGININE BIOSYNTHESIS BIFUNCTIONAL PROTEIN ARGJ"/>
    <property type="match status" value="1"/>
</dbReference>
<dbReference type="PANTHER" id="PTHR23100:SF0">
    <property type="entry name" value="ARGININE BIOSYNTHESIS BIFUNCTIONAL PROTEIN ARGJ, MITOCHONDRIAL"/>
    <property type="match status" value="1"/>
</dbReference>
<dbReference type="Pfam" id="PF01960">
    <property type="entry name" value="ArgJ"/>
    <property type="match status" value="1"/>
</dbReference>
<dbReference type="SUPFAM" id="SSF56266">
    <property type="entry name" value="DmpA/ArgJ-like"/>
    <property type="match status" value="1"/>
</dbReference>
<organism>
    <name type="scientific">Corynebacterium efficiens (strain DSM 44549 / YS-314 / AJ 12310 / JCM 11189 / NBRC 100395)</name>
    <dbReference type="NCBI Taxonomy" id="196164"/>
    <lineage>
        <taxon>Bacteria</taxon>
        <taxon>Bacillati</taxon>
        <taxon>Actinomycetota</taxon>
        <taxon>Actinomycetes</taxon>
        <taxon>Mycobacteriales</taxon>
        <taxon>Corynebacteriaceae</taxon>
        <taxon>Corynebacterium</taxon>
    </lineage>
</organism>
<comment type="function">
    <text evidence="1">Catalyzes two activities which are involved in the cyclic version of arginine biosynthesis: the synthesis of N-acetylglutamate from glutamate and acetyl-CoA as the acetyl donor, and of ornithine by transacetylation between N(2)-acetylornithine and glutamate.</text>
</comment>
<comment type="catalytic activity">
    <reaction evidence="1">
        <text>N(2)-acetyl-L-ornithine + L-glutamate = N-acetyl-L-glutamate + L-ornithine</text>
        <dbReference type="Rhea" id="RHEA:15349"/>
        <dbReference type="ChEBI" id="CHEBI:29985"/>
        <dbReference type="ChEBI" id="CHEBI:44337"/>
        <dbReference type="ChEBI" id="CHEBI:46911"/>
        <dbReference type="ChEBI" id="CHEBI:57805"/>
        <dbReference type="EC" id="2.3.1.35"/>
    </reaction>
</comment>
<comment type="catalytic activity">
    <reaction evidence="1">
        <text>L-glutamate + acetyl-CoA = N-acetyl-L-glutamate + CoA + H(+)</text>
        <dbReference type="Rhea" id="RHEA:24292"/>
        <dbReference type="ChEBI" id="CHEBI:15378"/>
        <dbReference type="ChEBI" id="CHEBI:29985"/>
        <dbReference type="ChEBI" id="CHEBI:44337"/>
        <dbReference type="ChEBI" id="CHEBI:57287"/>
        <dbReference type="ChEBI" id="CHEBI:57288"/>
        <dbReference type="EC" id="2.3.1.1"/>
    </reaction>
</comment>
<comment type="pathway">
    <text evidence="1">Amino-acid biosynthesis; L-arginine biosynthesis; L-ornithine and N-acetyl-L-glutamate from L-glutamate and N(2)-acetyl-L-ornithine (cyclic): step 1/1.</text>
</comment>
<comment type="pathway">
    <text evidence="1">Amino-acid biosynthesis; L-arginine biosynthesis; N(2)-acetyl-L-ornithine from L-glutamate: step 1/4.</text>
</comment>
<comment type="subunit">
    <text evidence="1">Heterotetramer of two alpha and two beta chains.</text>
</comment>
<comment type="subcellular location">
    <subcellularLocation>
        <location evidence="1">Cytoplasm</location>
    </subcellularLocation>
</comment>
<comment type="similarity">
    <text evidence="1">Belongs to the ArgJ family.</text>
</comment>
<sequence length="388" mass="39543">MAQTGITAPKGFVASATTAGIKPSGKPDMALVVNQGPEYTAAAVFTRNRVIASPVKVSRENVADGQLKAVLYNAGNANACNGTQGDADARESVNTLATKLGLAPEDIGVCSTGLIGELLPMDKVTAGIEALTAEGALGDNGAAAAQAIMTTDTVDKETVVFADGWTVGAMGKGVGMMAPSLATMLVCLTTDASITPAMARIALAKATAVTFETLDIDGSTSTNDTVFLLASGASGVKPTQDELNDAVFAACSDLAEQMQADAEGVTKRVSVTVTGTTTDEMAINAARTIARDNLFKCAMFGSDPNWGRVLAAVGMADADMDPDHIAVYFNDQAVCLDSTGAPGAREVDLSGADIAVRVDLGAGGEGQATVRTTDLSYSYVEINSAYST</sequence>
<reference key="1">
    <citation type="journal article" date="2003" name="Genome Res.">
        <title>Comparative complete genome sequence analysis of the amino acid replacements responsible for the thermostability of Corynebacterium efficiens.</title>
        <authorList>
            <person name="Nishio Y."/>
            <person name="Nakamura Y."/>
            <person name="Kawarabayasi Y."/>
            <person name="Usuda Y."/>
            <person name="Kimura E."/>
            <person name="Sugimoto S."/>
            <person name="Matsui K."/>
            <person name="Yamagishi A."/>
            <person name="Kikuchi H."/>
            <person name="Ikeo K."/>
            <person name="Gojobori T."/>
        </authorList>
    </citation>
    <scope>NUCLEOTIDE SEQUENCE [LARGE SCALE GENOMIC DNA]</scope>
    <source>
        <strain>DSM 44549 / YS-314 / AJ 12310 / JCM 11189 / NBRC 100395</strain>
    </source>
</reference>
<evidence type="ECO:0000255" key="1">
    <source>
        <dbReference type="HAMAP-Rule" id="MF_01106"/>
    </source>
</evidence>
<feature type="chain" id="PRO_0000002159" description="Arginine biosynthesis bifunctional protein ArgJ alpha chain" evidence="1">
    <location>
        <begin position="1"/>
        <end position="182"/>
    </location>
</feature>
<feature type="chain" id="PRO_0000002160" description="Arginine biosynthesis bifunctional protein ArgJ beta chain" evidence="1">
    <location>
        <begin position="183"/>
        <end position="388"/>
    </location>
</feature>
<feature type="active site" description="Nucleophile" evidence="1">
    <location>
        <position position="183"/>
    </location>
</feature>
<feature type="binding site" evidence="1">
    <location>
        <position position="150"/>
    </location>
    <ligand>
        <name>substrate</name>
    </ligand>
</feature>
<feature type="binding site" evidence="1">
    <location>
        <position position="172"/>
    </location>
    <ligand>
        <name>substrate</name>
    </ligand>
</feature>
<feature type="binding site" evidence="1">
    <location>
        <position position="183"/>
    </location>
    <ligand>
        <name>substrate</name>
    </ligand>
</feature>
<feature type="binding site" evidence="1">
    <location>
        <position position="263"/>
    </location>
    <ligand>
        <name>substrate</name>
    </ligand>
</feature>
<feature type="binding site" evidence="1">
    <location>
        <position position="383"/>
    </location>
    <ligand>
        <name>substrate</name>
    </ligand>
</feature>
<feature type="binding site" evidence="1">
    <location>
        <position position="388"/>
    </location>
    <ligand>
        <name>substrate</name>
    </ligand>
</feature>
<feature type="site" description="Involved in the stabilization of negative charge on the oxyanion by the formation of the oxyanion hole" evidence="1">
    <location>
        <position position="112"/>
    </location>
</feature>
<feature type="site" description="Involved in the stabilization of negative charge on the oxyanion by the formation of the oxyanion hole" evidence="1">
    <location>
        <position position="113"/>
    </location>
</feature>
<feature type="site" description="Cleavage; by autolysis" evidence="1">
    <location>
        <begin position="182"/>
        <end position="183"/>
    </location>
</feature>